<gene>
    <name evidence="1" type="primary">bchN</name>
    <name type="ordered locus">Rru_A0623</name>
</gene>
<sequence length="440" mass="47890">MTCRPALSDSHPPEPGTPSSPSFGVCGDRPLLRERGQHEVFCGLAGIIWLHRKIQDAFFLIIGSRTCAHLMQSAAGVMIFAEPRFATAVLEEQDLAGLADAQDEIDRVVARLLERRPDIRLLFLVGSCPSEVIKIDLQRAALRLSKVHGARTRVVSYSGSGLETTFTQGEDACLAALVPDLPSAAADEAPDLLVVGTLPDVVEDQFGRLFAEMGIARTAFLPPRRSTALPAIGPKTRFLLAQPFLGDTARCLEARGARRLAAPFPFGVEGTTGWLAAAAQAFGVDDLTFRRVTAPGRERAARALERQRATLEGKRVFFFPESQLEIPLARFLVRELGMEAIEIGTPYLHRAHLAEELALLPATALLSEGQDVDRQLDRCRAARPDLVVCGLGLANPLEAEGITTKWSIELVFSPIHGYEQAGDLAELFARPLLRRALLKV</sequence>
<dbReference type="EC" id="1.3.7.7" evidence="1"/>
<dbReference type="EMBL" id="CP000230">
    <property type="protein sequence ID" value="ABC21427.1"/>
    <property type="molecule type" value="Genomic_DNA"/>
</dbReference>
<dbReference type="RefSeq" id="WP_011388381.1">
    <property type="nucleotide sequence ID" value="NC_007643.1"/>
</dbReference>
<dbReference type="RefSeq" id="YP_425714.1">
    <property type="nucleotide sequence ID" value="NC_007643.1"/>
</dbReference>
<dbReference type="SMR" id="Q2RWR8"/>
<dbReference type="STRING" id="269796.Rru_A0623"/>
<dbReference type="EnsemblBacteria" id="ABC21427">
    <property type="protein sequence ID" value="ABC21427"/>
    <property type="gene ID" value="Rru_A0623"/>
</dbReference>
<dbReference type="KEGG" id="rru:Rru_A0623"/>
<dbReference type="PATRIC" id="fig|269796.9.peg.678"/>
<dbReference type="eggNOG" id="COG2710">
    <property type="taxonomic scope" value="Bacteria"/>
</dbReference>
<dbReference type="HOGENOM" id="CLU_037170_0_0_5"/>
<dbReference type="PhylomeDB" id="Q2RWR8"/>
<dbReference type="UniPathway" id="UPA00671"/>
<dbReference type="Proteomes" id="UP000001929">
    <property type="component" value="Chromosome"/>
</dbReference>
<dbReference type="GO" id="GO:0051539">
    <property type="term" value="F:4 iron, 4 sulfur cluster binding"/>
    <property type="evidence" value="ECO:0007669"/>
    <property type="project" value="UniProtKB-UniRule"/>
</dbReference>
<dbReference type="GO" id="GO:0005524">
    <property type="term" value="F:ATP binding"/>
    <property type="evidence" value="ECO:0007669"/>
    <property type="project" value="UniProtKB-UniRule"/>
</dbReference>
<dbReference type="GO" id="GO:0046872">
    <property type="term" value="F:metal ion binding"/>
    <property type="evidence" value="ECO:0007669"/>
    <property type="project" value="UniProtKB-KW"/>
</dbReference>
<dbReference type="GO" id="GO:0016730">
    <property type="term" value="F:oxidoreductase activity, acting on iron-sulfur proteins as donors"/>
    <property type="evidence" value="ECO:0007669"/>
    <property type="project" value="InterPro"/>
</dbReference>
<dbReference type="GO" id="GO:0016636">
    <property type="term" value="F:oxidoreductase activity, acting on the CH-CH group of donors, iron-sulfur protein as acceptor"/>
    <property type="evidence" value="ECO:0007669"/>
    <property type="project" value="UniProtKB-UniRule"/>
</dbReference>
<dbReference type="GO" id="GO:0036070">
    <property type="term" value="P:light-independent bacteriochlorophyll biosynthetic process"/>
    <property type="evidence" value="ECO:0007669"/>
    <property type="project" value="UniProtKB-UniRule"/>
</dbReference>
<dbReference type="GO" id="GO:0019685">
    <property type="term" value="P:photosynthesis, dark reaction"/>
    <property type="evidence" value="ECO:0007669"/>
    <property type="project" value="InterPro"/>
</dbReference>
<dbReference type="Gene3D" id="3.40.50.1980">
    <property type="entry name" value="Nitrogenase molybdenum iron protein domain"/>
    <property type="match status" value="3"/>
</dbReference>
<dbReference type="HAMAP" id="MF_00352">
    <property type="entry name" value="ChlN_BchN"/>
    <property type="match status" value="1"/>
</dbReference>
<dbReference type="InterPro" id="IPR050293">
    <property type="entry name" value="LIPOR_BchN/ChlN"/>
</dbReference>
<dbReference type="InterPro" id="IPR000510">
    <property type="entry name" value="Nase/OxRdtase_comp1"/>
</dbReference>
<dbReference type="InterPro" id="IPR005970">
    <property type="entry name" value="Protochl_reductN"/>
</dbReference>
<dbReference type="NCBIfam" id="TIGR01279">
    <property type="entry name" value="DPOR_bchN"/>
    <property type="match status" value="1"/>
</dbReference>
<dbReference type="NCBIfam" id="NF002768">
    <property type="entry name" value="PRK02842.1"/>
    <property type="match status" value="1"/>
</dbReference>
<dbReference type="PANTHER" id="PTHR39429">
    <property type="entry name" value="LIGHT-INDEPENDENT PROTOCHLOROPHYLLIDE REDUCTASE SUBUNIT N"/>
    <property type="match status" value="1"/>
</dbReference>
<dbReference type="PANTHER" id="PTHR39429:SF3">
    <property type="entry name" value="LIGHT-INDEPENDENT PROTOCHLOROPHYLLIDE REDUCTASE SUBUNIT N"/>
    <property type="match status" value="1"/>
</dbReference>
<dbReference type="Pfam" id="PF00148">
    <property type="entry name" value="Oxidored_nitro"/>
    <property type="match status" value="1"/>
</dbReference>
<dbReference type="PIRSF" id="PIRSF000162">
    <property type="entry name" value="P_chlorophyll_rd"/>
    <property type="match status" value="1"/>
</dbReference>
<dbReference type="SUPFAM" id="SSF53807">
    <property type="entry name" value="Helical backbone' metal receptor"/>
    <property type="match status" value="1"/>
</dbReference>
<name>BCHN_RHORT</name>
<organism>
    <name type="scientific">Rhodospirillum rubrum (strain ATCC 11170 / ATH 1.1.1 / DSM 467 / LMG 4362 / NCIMB 8255 / S1)</name>
    <dbReference type="NCBI Taxonomy" id="269796"/>
    <lineage>
        <taxon>Bacteria</taxon>
        <taxon>Pseudomonadati</taxon>
        <taxon>Pseudomonadota</taxon>
        <taxon>Alphaproteobacteria</taxon>
        <taxon>Rhodospirillales</taxon>
        <taxon>Rhodospirillaceae</taxon>
        <taxon>Rhodospirillum</taxon>
    </lineage>
</organism>
<comment type="function">
    <text evidence="1">Component of the dark-operative protochlorophyllide reductase (DPOR) that uses Mg-ATP and reduced ferredoxin to reduce ring D of protochlorophyllide (Pchlide) to form chlorophyllide a (Chlide). This reaction is light-independent. The NB-protein (BchN-BchB) is the catalytic component of the complex.</text>
</comment>
<comment type="catalytic activity">
    <reaction evidence="1">
        <text>chlorophyllide a + oxidized 2[4Fe-4S]-[ferredoxin] + 2 ADP + 2 phosphate = protochlorophyllide a + reduced 2[4Fe-4S]-[ferredoxin] + 2 ATP + 2 H2O</text>
        <dbReference type="Rhea" id="RHEA:28202"/>
        <dbReference type="Rhea" id="RHEA-COMP:10002"/>
        <dbReference type="Rhea" id="RHEA-COMP:10004"/>
        <dbReference type="ChEBI" id="CHEBI:15377"/>
        <dbReference type="ChEBI" id="CHEBI:30616"/>
        <dbReference type="ChEBI" id="CHEBI:33722"/>
        <dbReference type="ChEBI" id="CHEBI:33723"/>
        <dbReference type="ChEBI" id="CHEBI:43474"/>
        <dbReference type="ChEBI" id="CHEBI:83348"/>
        <dbReference type="ChEBI" id="CHEBI:83350"/>
        <dbReference type="ChEBI" id="CHEBI:456216"/>
        <dbReference type="EC" id="1.3.7.7"/>
    </reaction>
</comment>
<comment type="cofactor">
    <cofactor evidence="1">
        <name>[4Fe-4S] cluster</name>
        <dbReference type="ChEBI" id="CHEBI:49883"/>
    </cofactor>
    <text evidence="1">Binds 1 [4Fe-4S] cluster per heterodimer. The cluster is bound at the heterodimer interface by residues from both subunits.</text>
</comment>
<comment type="pathway">
    <text evidence="1">Porphyrin-containing compound metabolism; bacteriochlorophyll biosynthesis (light-independent).</text>
</comment>
<comment type="subunit">
    <text evidence="1">Protochlorophyllide reductase is composed of three subunits; BchL, BchN and BchB. Forms a heterotetramer of two BchB and two BchN subunits.</text>
</comment>
<comment type="similarity">
    <text evidence="1">Belongs to the BchN/ChlN family.</text>
</comment>
<accession>Q2RWR8</accession>
<protein>
    <recommendedName>
        <fullName evidence="1">Light-independent protochlorophyllide reductase subunit N</fullName>
        <shortName evidence="1">DPOR subunit N</shortName>
        <shortName evidence="1">LI-POR subunit N</shortName>
        <ecNumber evidence="1">1.3.7.7</ecNumber>
    </recommendedName>
</protein>
<proteinExistence type="inferred from homology"/>
<feature type="chain" id="PRO_0000324024" description="Light-independent protochlorophyllide reductase subunit N">
    <location>
        <begin position="1"/>
        <end position="440"/>
    </location>
</feature>
<feature type="region of interest" description="Disordered" evidence="2">
    <location>
        <begin position="1"/>
        <end position="24"/>
    </location>
</feature>
<feature type="binding site" evidence="1">
    <location>
        <position position="42"/>
    </location>
    <ligand>
        <name>[4Fe-4S] cluster</name>
        <dbReference type="ChEBI" id="CHEBI:49883"/>
        <note>ligand shared with heterodimeric partner</note>
    </ligand>
</feature>
<feature type="binding site" evidence="1">
    <location>
        <position position="67"/>
    </location>
    <ligand>
        <name>[4Fe-4S] cluster</name>
        <dbReference type="ChEBI" id="CHEBI:49883"/>
        <note>ligand shared with heterodimeric partner</note>
    </ligand>
</feature>
<feature type="binding site" evidence="1">
    <location>
        <position position="128"/>
    </location>
    <ligand>
        <name>[4Fe-4S] cluster</name>
        <dbReference type="ChEBI" id="CHEBI:49883"/>
        <note>ligand shared with heterodimeric partner</note>
    </ligand>
</feature>
<reference key="1">
    <citation type="journal article" date="2011" name="Stand. Genomic Sci.">
        <title>Complete genome sequence of Rhodospirillum rubrum type strain (S1).</title>
        <authorList>
            <person name="Munk A.C."/>
            <person name="Copeland A."/>
            <person name="Lucas S."/>
            <person name="Lapidus A."/>
            <person name="Del Rio T.G."/>
            <person name="Barry K."/>
            <person name="Detter J.C."/>
            <person name="Hammon N."/>
            <person name="Israni S."/>
            <person name="Pitluck S."/>
            <person name="Brettin T."/>
            <person name="Bruce D."/>
            <person name="Han C."/>
            <person name="Tapia R."/>
            <person name="Gilna P."/>
            <person name="Schmutz J."/>
            <person name="Larimer F."/>
            <person name="Land M."/>
            <person name="Kyrpides N.C."/>
            <person name="Mavromatis K."/>
            <person name="Richardson P."/>
            <person name="Rohde M."/>
            <person name="Goeker M."/>
            <person name="Klenk H.P."/>
            <person name="Zhang Y."/>
            <person name="Roberts G.P."/>
            <person name="Reslewic S."/>
            <person name="Schwartz D.C."/>
        </authorList>
    </citation>
    <scope>NUCLEOTIDE SEQUENCE [LARGE SCALE GENOMIC DNA]</scope>
    <source>
        <strain>ATCC 11170 / ATH 1.1.1 / DSM 467 / LMG 4362 / NCIMB 8255 / S1</strain>
    </source>
</reference>
<keyword id="KW-0004">4Fe-4S</keyword>
<keyword id="KW-0067">ATP-binding</keyword>
<keyword id="KW-0077">Bacteriochlorophyll biosynthesis</keyword>
<keyword id="KW-0149">Chlorophyll biosynthesis</keyword>
<keyword id="KW-0408">Iron</keyword>
<keyword id="KW-0411">Iron-sulfur</keyword>
<keyword id="KW-0479">Metal-binding</keyword>
<keyword id="KW-0547">Nucleotide-binding</keyword>
<keyword id="KW-0560">Oxidoreductase</keyword>
<keyword id="KW-0602">Photosynthesis</keyword>
<keyword id="KW-1185">Reference proteome</keyword>
<evidence type="ECO:0000255" key="1">
    <source>
        <dbReference type="HAMAP-Rule" id="MF_00352"/>
    </source>
</evidence>
<evidence type="ECO:0000256" key="2">
    <source>
        <dbReference type="SAM" id="MobiDB-lite"/>
    </source>
</evidence>